<sequence>MSEQKLALNEYLKTDSDYLRGTIKEGLDSAVTGSFSDGDQQLIKFHGFYQQDDRDLRNERKEQKLEPLYSFMLRARVPGGICSPQQWLGVDKIASTLTSSNSIRLTTRQTFQYHGIPKRNLKTIIQDLDREALDSIAACGDVNRNVMCNPNPVESKLHEQAYAVAKQLSDHLLPHTRAYAEIWLDEEKLLSTEDETVEPVYGKTYLPRKFKMAVAVPPDNDVDVYTNDLGFIAVAENGELVGFNLTAGGGMGSTHGEVETFPRLADDFGFIKTEDVMKFAEAVMTVQRDWGNRVNRKRSRLKYTIVDHGYEKFKAEVELRAGVKFEPKRDVVIGDRGDRYGWVEGVDGKWHLTLFIESGRIKDLPGQTLQTGLREIAKIHKGDFRMTSNQNMIIAGVAAEDKATIEGLARKHGLLGQVLTQTRGHSIACVALPTCPLAMAEAERYFPEFIDHIDALQAKHGISEQAIVVRMTGCPNGCARPFAAEIGLVGKAPGRYNLYLGASFEGTRLNKMHRENIQEAEILAELDTLFGRYAVERDAGETFGNFTVRVGVVKAVIDAAKDFHG</sequence>
<dbReference type="EC" id="1.8.1.2" evidence="1"/>
<dbReference type="EMBL" id="CP000563">
    <property type="protein sequence ID" value="ABN62892.1"/>
    <property type="molecule type" value="Genomic_DNA"/>
</dbReference>
<dbReference type="RefSeq" id="WP_006085931.1">
    <property type="nucleotide sequence ID" value="NC_009052.1"/>
</dbReference>
<dbReference type="SMR" id="A3D829"/>
<dbReference type="STRING" id="325240.Sbal_3415"/>
<dbReference type="GeneID" id="11771253"/>
<dbReference type="KEGG" id="sbl:Sbal_3415"/>
<dbReference type="HOGENOM" id="CLU_001975_3_2_6"/>
<dbReference type="OrthoDB" id="3189055at2"/>
<dbReference type="UniPathway" id="UPA00140">
    <property type="reaction ID" value="UER00207"/>
</dbReference>
<dbReference type="Proteomes" id="UP000001557">
    <property type="component" value="Chromosome"/>
</dbReference>
<dbReference type="GO" id="GO:0009337">
    <property type="term" value="C:sulfite reductase complex (NADPH)"/>
    <property type="evidence" value="ECO:0007669"/>
    <property type="project" value="InterPro"/>
</dbReference>
<dbReference type="GO" id="GO:0051539">
    <property type="term" value="F:4 iron, 4 sulfur cluster binding"/>
    <property type="evidence" value="ECO:0007669"/>
    <property type="project" value="UniProtKB-KW"/>
</dbReference>
<dbReference type="GO" id="GO:0020037">
    <property type="term" value="F:heme binding"/>
    <property type="evidence" value="ECO:0007669"/>
    <property type="project" value="InterPro"/>
</dbReference>
<dbReference type="GO" id="GO:0046872">
    <property type="term" value="F:metal ion binding"/>
    <property type="evidence" value="ECO:0007669"/>
    <property type="project" value="UniProtKB-KW"/>
</dbReference>
<dbReference type="GO" id="GO:0050661">
    <property type="term" value="F:NADP binding"/>
    <property type="evidence" value="ECO:0007669"/>
    <property type="project" value="InterPro"/>
</dbReference>
<dbReference type="GO" id="GO:0050311">
    <property type="term" value="F:sulfite reductase (ferredoxin) activity"/>
    <property type="evidence" value="ECO:0007669"/>
    <property type="project" value="TreeGrafter"/>
</dbReference>
<dbReference type="GO" id="GO:0004783">
    <property type="term" value="F:sulfite reductase (NADPH) activity"/>
    <property type="evidence" value="ECO:0007669"/>
    <property type="project" value="UniProtKB-UniRule"/>
</dbReference>
<dbReference type="GO" id="GO:0019344">
    <property type="term" value="P:cysteine biosynthetic process"/>
    <property type="evidence" value="ECO:0007669"/>
    <property type="project" value="UniProtKB-KW"/>
</dbReference>
<dbReference type="GO" id="GO:0070814">
    <property type="term" value="P:hydrogen sulfide biosynthetic process"/>
    <property type="evidence" value="ECO:0007669"/>
    <property type="project" value="UniProtKB-UniRule"/>
</dbReference>
<dbReference type="GO" id="GO:0000103">
    <property type="term" value="P:sulfate assimilation"/>
    <property type="evidence" value="ECO:0007669"/>
    <property type="project" value="UniProtKB-UniRule"/>
</dbReference>
<dbReference type="FunFam" id="3.30.413.10:FF:000003">
    <property type="entry name" value="Sulfite reductase [NADPH] hemoprotein beta-component"/>
    <property type="match status" value="1"/>
</dbReference>
<dbReference type="FunFam" id="3.30.413.10:FF:000004">
    <property type="entry name" value="Sulfite reductase [NADPH] hemoprotein beta-component"/>
    <property type="match status" value="1"/>
</dbReference>
<dbReference type="Gene3D" id="3.30.413.10">
    <property type="entry name" value="Sulfite Reductase Hemoprotein, domain 1"/>
    <property type="match status" value="2"/>
</dbReference>
<dbReference type="HAMAP" id="MF_01540">
    <property type="entry name" value="CysI"/>
    <property type="match status" value="1"/>
</dbReference>
<dbReference type="InterPro" id="IPR011786">
    <property type="entry name" value="CysI"/>
</dbReference>
<dbReference type="InterPro" id="IPR005117">
    <property type="entry name" value="NiRdtase/SiRdtase_haem-b_fer"/>
</dbReference>
<dbReference type="InterPro" id="IPR036136">
    <property type="entry name" value="Nit/Sulf_reduc_fer-like_dom_sf"/>
</dbReference>
<dbReference type="InterPro" id="IPR006067">
    <property type="entry name" value="NO2/SO3_Rdtase_4Fe4S_dom"/>
</dbReference>
<dbReference type="InterPro" id="IPR045169">
    <property type="entry name" value="NO2/SO3_Rdtase_4Fe4S_prot"/>
</dbReference>
<dbReference type="InterPro" id="IPR045854">
    <property type="entry name" value="NO2/SO3_Rdtase_4Fe4S_sf"/>
</dbReference>
<dbReference type="InterPro" id="IPR006066">
    <property type="entry name" value="NO2/SO3_Rdtase_FeS/sirohaem_BS"/>
</dbReference>
<dbReference type="NCBIfam" id="TIGR02041">
    <property type="entry name" value="CysI"/>
    <property type="match status" value="1"/>
</dbReference>
<dbReference type="NCBIfam" id="NF010029">
    <property type="entry name" value="PRK13504.1"/>
    <property type="match status" value="1"/>
</dbReference>
<dbReference type="PANTHER" id="PTHR11493:SF47">
    <property type="entry name" value="SULFITE REDUCTASE [NADPH] SUBUNIT BETA"/>
    <property type="match status" value="1"/>
</dbReference>
<dbReference type="PANTHER" id="PTHR11493">
    <property type="entry name" value="SULFITE REDUCTASE [NADPH] SUBUNIT BETA-RELATED"/>
    <property type="match status" value="1"/>
</dbReference>
<dbReference type="Pfam" id="PF01077">
    <property type="entry name" value="NIR_SIR"/>
    <property type="match status" value="1"/>
</dbReference>
<dbReference type="Pfam" id="PF03460">
    <property type="entry name" value="NIR_SIR_ferr"/>
    <property type="match status" value="2"/>
</dbReference>
<dbReference type="PRINTS" id="PR00397">
    <property type="entry name" value="SIROHAEM"/>
</dbReference>
<dbReference type="SUPFAM" id="SSF56014">
    <property type="entry name" value="Nitrite and sulphite reductase 4Fe-4S domain-like"/>
    <property type="match status" value="2"/>
</dbReference>
<dbReference type="SUPFAM" id="SSF55124">
    <property type="entry name" value="Nitrite/Sulfite reductase N-terminal domain-like"/>
    <property type="match status" value="2"/>
</dbReference>
<dbReference type="PROSITE" id="PS00365">
    <property type="entry name" value="NIR_SIR"/>
    <property type="match status" value="1"/>
</dbReference>
<feature type="chain" id="PRO_1000068768" description="Sulfite reductase [NADPH] hemoprotein beta-component">
    <location>
        <begin position="1"/>
        <end position="565"/>
    </location>
</feature>
<feature type="binding site" evidence="1">
    <location>
        <position position="429"/>
    </location>
    <ligand>
        <name>[4Fe-4S] cluster</name>
        <dbReference type="ChEBI" id="CHEBI:49883"/>
    </ligand>
</feature>
<feature type="binding site" evidence="1">
    <location>
        <position position="435"/>
    </location>
    <ligand>
        <name>[4Fe-4S] cluster</name>
        <dbReference type="ChEBI" id="CHEBI:49883"/>
    </ligand>
</feature>
<feature type="binding site" evidence="1">
    <location>
        <position position="474"/>
    </location>
    <ligand>
        <name>[4Fe-4S] cluster</name>
        <dbReference type="ChEBI" id="CHEBI:49883"/>
    </ligand>
</feature>
<feature type="binding site" evidence="1">
    <location>
        <position position="478"/>
    </location>
    <ligand>
        <name>[4Fe-4S] cluster</name>
        <dbReference type="ChEBI" id="CHEBI:49883"/>
    </ligand>
</feature>
<feature type="binding site" description="axial binding residue" evidence="1">
    <location>
        <position position="478"/>
    </location>
    <ligand>
        <name>siroheme</name>
        <dbReference type="ChEBI" id="CHEBI:60052"/>
    </ligand>
    <ligandPart>
        <name>Fe</name>
        <dbReference type="ChEBI" id="CHEBI:18248"/>
    </ligandPart>
</feature>
<keyword id="KW-0004">4Fe-4S</keyword>
<keyword id="KW-0028">Amino-acid biosynthesis</keyword>
<keyword id="KW-0198">Cysteine biosynthesis</keyword>
<keyword id="KW-0349">Heme</keyword>
<keyword id="KW-0408">Iron</keyword>
<keyword id="KW-0411">Iron-sulfur</keyword>
<keyword id="KW-0479">Metal-binding</keyword>
<keyword id="KW-0521">NADP</keyword>
<keyword id="KW-0560">Oxidoreductase</keyword>
<keyword id="KW-1185">Reference proteome</keyword>
<proteinExistence type="inferred from homology"/>
<organism>
    <name type="scientific">Shewanella baltica (strain OS155 / ATCC BAA-1091)</name>
    <dbReference type="NCBI Taxonomy" id="325240"/>
    <lineage>
        <taxon>Bacteria</taxon>
        <taxon>Pseudomonadati</taxon>
        <taxon>Pseudomonadota</taxon>
        <taxon>Gammaproteobacteria</taxon>
        <taxon>Alteromonadales</taxon>
        <taxon>Shewanellaceae</taxon>
        <taxon>Shewanella</taxon>
    </lineage>
</organism>
<evidence type="ECO:0000255" key="1">
    <source>
        <dbReference type="HAMAP-Rule" id="MF_01540"/>
    </source>
</evidence>
<protein>
    <recommendedName>
        <fullName evidence="1">Sulfite reductase [NADPH] hemoprotein beta-component</fullName>
        <shortName evidence="1">SiR-HP</shortName>
        <shortName evidence="1">SiRHP</shortName>
        <ecNumber evidence="1">1.8.1.2</ecNumber>
    </recommendedName>
</protein>
<accession>A3D829</accession>
<gene>
    <name evidence="1" type="primary">cysI</name>
    <name type="ordered locus">Sbal_3415</name>
</gene>
<name>CYSI_SHEB5</name>
<comment type="function">
    <text evidence="1">Component of the sulfite reductase complex that catalyzes the 6-electron reduction of sulfite to sulfide. This is one of several activities required for the biosynthesis of L-cysteine from sulfate.</text>
</comment>
<comment type="catalytic activity">
    <reaction evidence="1">
        <text>hydrogen sulfide + 3 NADP(+) + 3 H2O = sulfite + 3 NADPH + 4 H(+)</text>
        <dbReference type="Rhea" id="RHEA:13801"/>
        <dbReference type="ChEBI" id="CHEBI:15377"/>
        <dbReference type="ChEBI" id="CHEBI:15378"/>
        <dbReference type="ChEBI" id="CHEBI:17359"/>
        <dbReference type="ChEBI" id="CHEBI:29919"/>
        <dbReference type="ChEBI" id="CHEBI:57783"/>
        <dbReference type="ChEBI" id="CHEBI:58349"/>
        <dbReference type="EC" id="1.8.1.2"/>
    </reaction>
</comment>
<comment type="cofactor">
    <cofactor evidence="1">
        <name>siroheme</name>
        <dbReference type="ChEBI" id="CHEBI:60052"/>
    </cofactor>
    <text evidence="1">Binds 1 siroheme per subunit.</text>
</comment>
<comment type="cofactor">
    <cofactor evidence="1">
        <name>[4Fe-4S] cluster</name>
        <dbReference type="ChEBI" id="CHEBI:49883"/>
    </cofactor>
    <text evidence="1">Binds 1 [4Fe-4S] cluster per subunit.</text>
</comment>
<comment type="pathway">
    <text evidence="1">Sulfur metabolism; hydrogen sulfide biosynthesis; hydrogen sulfide from sulfite (NADPH route): step 1/1.</text>
</comment>
<comment type="subunit">
    <text evidence="1">Alpha(8)-beta(8). The alpha component is a flavoprotein, the beta component is a hemoprotein.</text>
</comment>
<comment type="similarity">
    <text evidence="1">Belongs to the nitrite and sulfite reductase 4Fe-4S domain family.</text>
</comment>
<reference key="1">
    <citation type="submission" date="2007-02" db="EMBL/GenBank/DDBJ databases">
        <title>Complete sequence of chromosome of Shewanella baltica OS155.</title>
        <authorList>
            <consortium name="US DOE Joint Genome Institute"/>
            <person name="Copeland A."/>
            <person name="Lucas S."/>
            <person name="Lapidus A."/>
            <person name="Barry K."/>
            <person name="Detter J.C."/>
            <person name="Glavina del Rio T."/>
            <person name="Hammon N."/>
            <person name="Israni S."/>
            <person name="Dalin E."/>
            <person name="Tice H."/>
            <person name="Pitluck S."/>
            <person name="Sims D.R."/>
            <person name="Brettin T."/>
            <person name="Bruce D."/>
            <person name="Han C."/>
            <person name="Tapia R."/>
            <person name="Brainard J."/>
            <person name="Schmutz J."/>
            <person name="Larimer F."/>
            <person name="Land M."/>
            <person name="Hauser L."/>
            <person name="Kyrpides N."/>
            <person name="Mikhailova N."/>
            <person name="Brettar I."/>
            <person name="Klappenbach J."/>
            <person name="Konstantinidis K."/>
            <person name="Rodrigues J."/>
            <person name="Tiedje J."/>
            <person name="Richardson P."/>
        </authorList>
    </citation>
    <scope>NUCLEOTIDE SEQUENCE [LARGE SCALE GENOMIC DNA]</scope>
    <source>
        <strain>OS155 / ATCC BAA-1091</strain>
    </source>
</reference>